<comment type="function">
    <text evidence="1">Transaldolase is important for the balance of metabolites in the pentose-phosphate pathway.</text>
</comment>
<comment type="catalytic activity">
    <reaction evidence="1">
        <text>D-sedoheptulose 7-phosphate + D-glyceraldehyde 3-phosphate = D-erythrose 4-phosphate + beta-D-fructose 6-phosphate</text>
        <dbReference type="Rhea" id="RHEA:17053"/>
        <dbReference type="ChEBI" id="CHEBI:16897"/>
        <dbReference type="ChEBI" id="CHEBI:57483"/>
        <dbReference type="ChEBI" id="CHEBI:57634"/>
        <dbReference type="ChEBI" id="CHEBI:59776"/>
        <dbReference type="EC" id="2.2.1.2"/>
    </reaction>
</comment>
<comment type="pathway">
    <text evidence="1">Carbohydrate degradation; pentose phosphate pathway; D-glyceraldehyde 3-phosphate and beta-D-fructose 6-phosphate from D-ribose 5-phosphate and D-xylulose 5-phosphate (non-oxidative stage): step 2/3.</text>
</comment>
<comment type="subcellular location">
    <subcellularLocation>
        <location evidence="1">Cytoplasm</location>
    </subcellularLocation>
</comment>
<comment type="similarity">
    <text evidence="1">Belongs to the transaldolase family. Type 3B subfamily.</text>
</comment>
<evidence type="ECO:0000255" key="1">
    <source>
        <dbReference type="HAMAP-Rule" id="MF_00494"/>
    </source>
</evidence>
<name>TAL_BACP2</name>
<protein>
    <recommendedName>
        <fullName evidence="1">Probable transaldolase</fullName>
        <ecNumber evidence="1">2.2.1.2</ecNumber>
    </recommendedName>
</protein>
<organism>
    <name type="scientific">Bacillus pumilus (strain SAFR-032)</name>
    <dbReference type="NCBI Taxonomy" id="315750"/>
    <lineage>
        <taxon>Bacteria</taxon>
        <taxon>Bacillati</taxon>
        <taxon>Bacillota</taxon>
        <taxon>Bacilli</taxon>
        <taxon>Bacillales</taxon>
        <taxon>Bacillaceae</taxon>
        <taxon>Bacillus</taxon>
    </lineage>
</organism>
<gene>
    <name evidence="1" type="primary">tal</name>
    <name type="ordered locus">BPUM_3356</name>
</gene>
<dbReference type="EC" id="2.2.1.2" evidence="1"/>
<dbReference type="EMBL" id="CP000813">
    <property type="protein sequence ID" value="ABV64008.1"/>
    <property type="molecule type" value="Genomic_DNA"/>
</dbReference>
<dbReference type="SMR" id="A8FIE1"/>
<dbReference type="STRING" id="315750.BPUM_3356"/>
<dbReference type="KEGG" id="bpu:BPUM_3356"/>
<dbReference type="eggNOG" id="COG0176">
    <property type="taxonomic scope" value="Bacteria"/>
</dbReference>
<dbReference type="HOGENOM" id="CLU_079764_0_0_9"/>
<dbReference type="OrthoDB" id="9807051at2"/>
<dbReference type="UniPathway" id="UPA00115">
    <property type="reaction ID" value="UER00414"/>
</dbReference>
<dbReference type="Proteomes" id="UP000001355">
    <property type="component" value="Chromosome"/>
</dbReference>
<dbReference type="GO" id="GO:0005737">
    <property type="term" value="C:cytoplasm"/>
    <property type="evidence" value="ECO:0007669"/>
    <property type="project" value="UniProtKB-SubCell"/>
</dbReference>
<dbReference type="GO" id="GO:0016832">
    <property type="term" value="F:aldehyde-lyase activity"/>
    <property type="evidence" value="ECO:0007669"/>
    <property type="project" value="InterPro"/>
</dbReference>
<dbReference type="GO" id="GO:0004801">
    <property type="term" value="F:transaldolase activity"/>
    <property type="evidence" value="ECO:0007669"/>
    <property type="project" value="UniProtKB-UniRule"/>
</dbReference>
<dbReference type="GO" id="GO:0005975">
    <property type="term" value="P:carbohydrate metabolic process"/>
    <property type="evidence" value="ECO:0007669"/>
    <property type="project" value="InterPro"/>
</dbReference>
<dbReference type="GO" id="GO:0006098">
    <property type="term" value="P:pentose-phosphate shunt"/>
    <property type="evidence" value="ECO:0007669"/>
    <property type="project" value="UniProtKB-UniRule"/>
</dbReference>
<dbReference type="CDD" id="cd00956">
    <property type="entry name" value="Transaldolase_FSA"/>
    <property type="match status" value="1"/>
</dbReference>
<dbReference type="FunFam" id="3.20.20.70:FF:000018">
    <property type="entry name" value="Probable transaldolase"/>
    <property type="match status" value="1"/>
</dbReference>
<dbReference type="Gene3D" id="3.20.20.70">
    <property type="entry name" value="Aldolase class I"/>
    <property type="match status" value="1"/>
</dbReference>
<dbReference type="HAMAP" id="MF_00494">
    <property type="entry name" value="Transaldolase_3b"/>
    <property type="match status" value="1"/>
</dbReference>
<dbReference type="InterPro" id="IPR013785">
    <property type="entry name" value="Aldolase_TIM"/>
</dbReference>
<dbReference type="InterPro" id="IPR001585">
    <property type="entry name" value="TAL/FSA"/>
</dbReference>
<dbReference type="InterPro" id="IPR022999">
    <property type="entry name" value="Transaldolase_3B"/>
</dbReference>
<dbReference type="InterPro" id="IPR004731">
    <property type="entry name" value="Transaldolase_3B/F6P_aldolase"/>
</dbReference>
<dbReference type="InterPro" id="IPR018225">
    <property type="entry name" value="Transaldolase_AS"/>
</dbReference>
<dbReference type="InterPro" id="IPR033919">
    <property type="entry name" value="TSA/FSA_arc/bac"/>
</dbReference>
<dbReference type="NCBIfam" id="TIGR00875">
    <property type="entry name" value="fsa_talC_mipB"/>
    <property type="match status" value="1"/>
</dbReference>
<dbReference type="PANTHER" id="PTHR10683">
    <property type="entry name" value="TRANSALDOLASE"/>
    <property type="match status" value="1"/>
</dbReference>
<dbReference type="PANTHER" id="PTHR10683:SF36">
    <property type="entry name" value="TRANSALDOLASE"/>
    <property type="match status" value="1"/>
</dbReference>
<dbReference type="Pfam" id="PF00923">
    <property type="entry name" value="TAL_FSA"/>
    <property type="match status" value="1"/>
</dbReference>
<dbReference type="SUPFAM" id="SSF51569">
    <property type="entry name" value="Aldolase"/>
    <property type="match status" value="1"/>
</dbReference>
<dbReference type="PROSITE" id="PS01054">
    <property type="entry name" value="TRANSALDOLASE_1"/>
    <property type="match status" value="1"/>
</dbReference>
<dbReference type="PROSITE" id="PS00958">
    <property type="entry name" value="TRANSALDOLASE_2"/>
    <property type="match status" value="1"/>
</dbReference>
<keyword id="KW-0963">Cytoplasm</keyword>
<keyword id="KW-0570">Pentose shunt</keyword>
<keyword id="KW-0704">Schiff base</keyword>
<keyword id="KW-0808">Transferase</keyword>
<reference key="1">
    <citation type="journal article" date="2007" name="PLoS ONE">
        <title>Paradoxical DNA repair and peroxide resistance gene conservation in Bacillus pumilus SAFR-032.</title>
        <authorList>
            <person name="Gioia J."/>
            <person name="Yerrapragada S."/>
            <person name="Qin X."/>
            <person name="Jiang H."/>
            <person name="Igboeli O.C."/>
            <person name="Muzny D."/>
            <person name="Dugan-Rocha S."/>
            <person name="Ding Y."/>
            <person name="Hawes A."/>
            <person name="Liu W."/>
            <person name="Perez L."/>
            <person name="Kovar C."/>
            <person name="Dinh H."/>
            <person name="Lee S."/>
            <person name="Nazareth L."/>
            <person name="Blyth P."/>
            <person name="Holder M."/>
            <person name="Buhay C."/>
            <person name="Tirumalai M.R."/>
            <person name="Liu Y."/>
            <person name="Dasgupta I."/>
            <person name="Bokhetache L."/>
            <person name="Fujita M."/>
            <person name="Karouia F."/>
            <person name="Eswara Moorthy P."/>
            <person name="Siefert J."/>
            <person name="Uzman A."/>
            <person name="Buzumbo P."/>
            <person name="Verma A."/>
            <person name="Zwiya H."/>
            <person name="McWilliams B.D."/>
            <person name="Olowu A."/>
            <person name="Clinkenbeard K.D."/>
            <person name="Newcombe D."/>
            <person name="Golebiewski L."/>
            <person name="Petrosino J.F."/>
            <person name="Nicholson W.L."/>
            <person name="Fox G.E."/>
            <person name="Venkateswaran K."/>
            <person name="Highlander S.K."/>
            <person name="Weinstock G.M."/>
        </authorList>
    </citation>
    <scope>NUCLEOTIDE SEQUENCE [LARGE SCALE GENOMIC DNA]</scope>
    <source>
        <strain>SAFR-032</strain>
    </source>
</reference>
<sequence>MLFFVDTANIADIKEAHELGILAGVTTNPSLVAKEKDVSFHDRLREITDVVSGSVSAEVISLKAEEMIEEGKELAAIAPNITVKIPMTTDGLKAVKALTDLGIKTNVTLIFSANQALLAARAGATYVSPFLGRLDDIGQNGLDLISEVKTIFDVHGLDTQIIAASIRHPQHVTEAALRGAHIGTMPLKVIKQLTKHPLTDAGIEQFLADWNK</sequence>
<accession>A8FIE1</accession>
<proteinExistence type="inferred from homology"/>
<feature type="chain" id="PRO_1000126278" description="Probable transaldolase">
    <location>
        <begin position="1"/>
        <end position="212"/>
    </location>
</feature>
<feature type="active site" description="Schiff-base intermediate with substrate" evidence="1">
    <location>
        <position position="84"/>
    </location>
</feature>